<dbReference type="EMBL" id="AK007417">
    <property type="protein sequence ID" value="BAB25026.1"/>
    <property type="status" value="ALT_FRAME"/>
    <property type="molecule type" value="mRNA"/>
</dbReference>
<dbReference type="EMBL" id="AK135384">
    <property type="protein sequence ID" value="BAE22513.1"/>
    <property type="molecule type" value="mRNA"/>
</dbReference>
<dbReference type="EMBL" id="BC100444">
    <property type="status" value="NOT_ANNOTATED_CDS"/>
    <property type="molecule type" value="mRNA"/>
</dbReference>
<dbReference type="CCDS" id="CCDS51654.1"/>
<dbReference type="RefSeq" id="NP_001346237.1">
    <property type="nucleotide sequence ID" value="NM_001359308.1"/>
</dbReference>
<dbReference type="RefSeq" id="NP_081192.2">
    <property type="nucleotide sequence ID" value="NM_026916.3"/>
</dbReference>
<dbReference type="RefSeq" id="XP_006504556.1">
    <property type="nucleotide sequence ID" value="XM_006504493.3"/>
</dbReference>
<dbReference type="FunCoup" id="Q497P3">
    <property type="interactions" value="387"/>
</dbReference>
<dbReference type="STRING" id="10090.ENSMUSP00000137364"/>
<dbReference type="PhosphoSitePlus" id="Q497P3"/>
<dbReference type="PaxDb" id="10090-ENSMUSP00000137364"/>
<dbReference type="ProteomicsDB" id="293783"/>
<dbReference type="DNASU" id="69034"/>
<dbReference type="Ensembl" id="ENSMUST00000178355.3">
    <property type="protein sequence ID" value="ENSMUSP00000137364.2"/>
    <property type="gene ID" value="ENSMUSG00000095789.7"/>
</dbReference>
<dbReference type="Ensembl" id="ENSMUST00000194521.2">
    <property type="protein sequence ID" value="ENSMUSP00000142125.2"/>
    <property type="gene ID" value="ENSMUSG00000095789.7"/>
</dbReference>
<dbReference type="Ensembl" id="ENSMUST00000195766.6">
    <property type="protein sequence ID" value="ENSMUSP00000141660.2"/>
    <property type="gene ID" value="ENSMUSG00000095789.7"/>
</dbReference>
<dbReference type="GeneID" id="69034"/>
<dbReference type="KEGG" id="mmu:69034"/>
<dbReference type="UCSC" id="uc008ztp.2">
    <property type="organism name" value="mouse"/>
</dbReference>
<dbReference type="AGR" id="MGI:1923099"/>
<dbReference type="CTD" id="389493"/>
<dbReference type="MGI" id="MGI:1923099">
    <property type="gene designation" value="Nupr2"/>
</dbReference>
<dbReference type="VEuPathDB" id="HostDB:ENSMUSG00000095789"/>
<dbReference type="eggNOG" id="KOG4319">
    <property type="taxonomic scope" value="Eukaryota"/>
</dbReference>
<dbReference type="GeneTree" id="ENSGT00530000064242"/>
<dbReference type="HOGENOM" id="CLU_180450_1_0_1"/>
<dbReference type="InParanoid" id="Q497P3"/>
<dbReference type="OMA" id="KYHNSEM"/>
<dbReference type="OrthoDB" id="10030453at2759"/>
<dbReference type="PhylomeDB" id="Q497P3"/>
<dbReference type="TreeFam" id="TF339452"/>
<dbReference type="BioGRID-ORCS" id="69034">
    <property type="hits" value="2 hits in 77 CRISPR screens"/>
</dbReference>
<dbReference type="ChiTaRS" id="Nupr1l">
    <property type="organism name" value="mouse"/>
</dbReference>
<dbReference type="PRO" id="PR:Q497P3"/>
<dbReference type="Proteomes" id="UP000000589">
    <property type="component" value="Chromosome 5"/>
</dbReference>
<dbReference type="RNAct" id="Q497P3">
    <property type="molecule type" value="protein"/>
</dbReference>
<dbReference type="Bgee" id="ENSMUSG00000095789">
    <property type="expression patterns" value="Expressed in spermatid and 72 other cell types or tissues"/>
</dbReference>
<dbReference type="GO" id="GO:0005634">
    <property type="term" value="C:nucleus"/>
    <property type="evidence" value="ECO:0000250"/>
    <property type="project" value="UniProtKB"/>
</dbReference>
<dbReference type="GO" id="GO:0009267">
    <property type="term" value="P:cellular response to starvation"/>
    <property type="evidence" value="ECO:0000250"/>
    <property type="project" value="UniProtKB"/>
</dbReference>
<dbReference type="GO" id="GO:0006974">
    <property type="term" value="P:DNA damage response"/>
    <property type="evidence" value="ECO:0000250"/>
    <property type="project" value="UniProtKB"/>
</dbReference>
<dbReference type="GO" id="GO:0008285">
    <property type="term" value="P:negative regulation of cell population proliferation"/>
    <property type="evidence" value="ECO:0000250"/>
    <property type="project" value="UniProtKB"/>
</dbReference>
<dbReference type="GO" id="GO:0000122">
    <property type="term" value="P:negative regulation of transcription by RNA polymerase II"/>
    <property type="evidence" value="ECO:0000250"/>
    <property type="project" value="UniProtKB"/>
</dbReference>
<dbReference type="GO" id="GO:0051726">
    <property type="term" value="P:regulation of cell cycle"/>
    <property type="evidence" value="ECO:0000250"/>
    <property type="project" value="UniProtKB"/>
</dbReference>
<dbReference type="InterPro" id="IPR018792">
    <property type="entry name" value="NUPR1-like"/>
</dbReference>
<dbReference type="PANTHER" id="PTHR17149">
    <property type="entry name" value="NUCLEAR PROTEIN 1 AND 2"/>
    <property type="match status" value="1"/>
</dbReference>
<dbReference type="PANTHER" id="PTHR17149:SF3">
    <property type="entry name" value="NUCLEAR PROTEIN 2"/>
    <property type="match status" value="1"/>
</dbReference>
<dbReference type="Pfam" id="PF10195">
    <property type="entry name" value="Phospho_p8"/>
    <property type="match status" value="1"/>
</dbReference>
<gene>
    <name evidence="1" type="primary">Nupr2</name>
    <name evidence="1" type="synonym">Nupr1l</name>
</gene>
<proteinExistence type="inferred from homology"/>
<accession>Q497P3</accession>
<accession>Q3UXQ0</accession>
<accession>Q9D923</accession>
<comment type="function">
    <text evidence="1">Acts as a transcriptional repressor by inhibiting gene expression at the NUPR1 promoter in a p53/TP53-dependent manner in cancer cells. Involved in the G1 cell cycle arrest, and in a decrease in cell viability and cell proliferation of pancreatic cancer cells. Plays a role as a negative regulator of the protumoral factor NUPR1.</text>
</comment>
<comment type="subcellular location">
    <subcellularLocation>
        <location evidence="1">Nucleus</location>
    </subcellularLocation>
</comment>
<comment type="similarity">
    <text evidence="3">Belongs to the NUPR family.</text>
</comment>
<comment type="sequence caution" evidence="3">
    <conflict type="frameshift">
        <sequence resource="EMBL-CDS" id="BAB25026"/>
    </conflict>
</comment>
<evidence type="ECO:0000250" key="1">
    <source>
        <dbReference type="UniProtKB" id="A6NF83"/>
    </source>
</evidence>
<evidence type="ECO:0000256" key="2">
    <source>
        <dbReference type="SAM" id="MobiDB-lite"/>
    </source>
</evidence>
<evidence type="ECO:0000305" key="3"/>
<reference key="1">
    <citation type="journal article" date="2005" name="Science">
        <title>The transcriptional landscape of the mammalian genome.</title>
        <authorList>
            <person name="Carninci P."/>
            <person name="Kasukawa T."/>
            <person name="Katayama S."/>
            <person name="Gough J."/>
            <person name="Frith M.C."/>
            <person name="Maeda N."/>
            <person name="Oyama R."/>
            <person name="Ravasi T."/>
            <person name="Lenhard B."/>
            <person name="Wells C."/>
            <person name="Kodzius R."/>
            <person name="Shimokawa K."/>
            <person name="Bajic V.B."/>
            <person name="Brenner S.E."/>
            <person name="Batalov S."/>
            <person name="Forrest A.R."/>
            <person name="Zavolan M."/>
            <person name="Davis M.J."/>
            <person name="Wilming L.G."/>
            <person name="Aidinis V."/>
            <person name="Allen J.E."/>
            <person name="Ambesi-Impiombato A."/>
            <person name="Apweiler R."/>
            <person name="Aturaliya R.N."/>
            <person name="Bailey T.L."/>
            <person name="Bansal M."/>
            <person name="Baxter L."/>
            <person name="Beisel K.W."/>
            <person name="Bersano T."/>
            <person name="Bono H."/>
            <person name="Chalk A.M."/>
            <person name="Chiu K.P."/>
            <person name="Choudhary V."/>
            <person name="Christoffels A."/>
            <person name="Clutterbuck D.R."/>
            <person name="Crowe M.L."/>
            <person name="Dalla E."/>
            <person name="Dalrymple B.P."/>
            <person name="de Bono B."/>
            <person name="Della Gatta G."/>
            <person name="di Bernardo D."/>
            <person name="Down T."/>
            <person name="Engstrom P."/>
            <person name="Fagiolini M."/>
            <person name="Faulkner G."/>
            <person name="Fletcher C.F."/>
            <person name="Fukushima T."/>
            <person name="Furuno M."/>
            <person name="Futaki S."/>
            <person name="Gariboldi M."/>
            <person name="Georgii-Hemming P."/>
            <person name="Gingeras T.R."/>
            <person name="Gojobori T."/>
            <person name="Green R.E."/>
            <person name="Gustincich S."/>
            <person name="Harbers M."/>
            <person name="Hayashi Y."/>
            <person name="Hensch T.K."/>
            <person name="Hirokawa N."/>
            <person name="Hill D."/>
            <person name="Huminiecki L."/>
            <person name="Iacono M."/>
            <person name="Ikeo K."/>
            <person name="Iwama A."/>
            <person name="Ishikawa T."/>
            <person name="Jakt M."/>
            <person name="Kanapin A."/>
            <person name="Katoh M."/>
            <person name="Kawasawa Y."/>
            <person name="Kelso J."/>
            <person name="Kitamura H."/>
            <person name="Kitano H."/>
            <person name="Kollias G."/>
            <person name="Krishnan S.P."/>
            <person name="Kruger A."/>
            <person name="Kummerfeld S.K."/>
            <person name="Kurochkin I.V."/>
            <person name="Lareau L.F."/>
            <person name="Lazarevic D."/>
            <person name="Lipovich L."/>
            <person name="Liu J."/>
            <person name="Liuni S."/>
            <person name="McWilliam S."/>
            <person name="Madan Babu M."/>
            <person name="Madera M."/>
            <person name="Marchionni L."/>
            <person name="Matsuda H."/>
            <person name="Matsuzawa S."/>
            <person name="Miki H."/>
            <person name="Mignone F."/>
            <person name="Miyake S."/>
            <person name="Morris K."/>
            <person name="Mottagui-Tabar S."/>
            <person name="Mulder N."/>
            <person name="Nakano N."/>
            <person name="Nakauchi H."/>
            <person name="Ng P."/>
            <person name="Nilsson R."/>
            <person name="Nishiguchi S."/>
            <person name="Nishikawa S."/>
            <person name="Nori F."/>
            <person name="Ohara O."/>
            <person name="Okazaki Y."/>
            <person name="Orlando V."/>
            <person name="Pang K.C."/>
            <person name="Pavan W.J."/>
            <person name="Pavesi G."/>
            <person name="Pesole G."/>
            <person name="Petrovsky N."/>
            <person name="Piazza S."/>
            <person name="Reed J."/>
            <person name="Reid J.F."/>
            <person name="Ring B.Z."/>
            <person name="Ringwald M."/>
            <person name="Rost B."/>
            <person name="Ruan Y."/>
            <person name="Salzberg S.L."/>
            <person name="Sandelin A."/>
            <person name="Schneider C."/>
            <person name="Schoenbach C."/>
            <person name="Sekiguchi K."/>
            <person name="Semple C.A."/>
            <person name="Seno S."/>
            <person name="Sessa L."/>
            <person name="Sheng Y."/>
            <person name="Shibata Y."/>
            <person name="Shimada H."/>
            <person name="Shimada K."/>
            <person name="Silva D."/>
            <person name="Sinclair B."/>
            <person name="Sperling S."/>
            <person name="Stupka E."/>
            <person name="Sugiura K."/>
            <person name="Sultana R."/>
            <person name="Takenaka Y."/>
            <person name="Taki K."/>
            <person name="Tammoja K."/>
            <person name="Tan S.L."/>
            <person name="Tang S."/>
            <person name="Taylor M.S."/>
            <person name="Tegner J."/>
            <person name="Teichmann S.A."/>
            <person name="Ueda H.R."/>
            <person name="van Nimwegen E."/>
            <person name="Verardo R."/>
            <person name="Wei C.L."/>
            <person name="Yagi K."/>
            <person name="Yamanishi H."/>
            <person name="Zabarovsky E."/>
            <person name="Zhu S."/>
            <person name="Zimmer A."/>
            <person name="Hide W."/>
            <person name="Bult C."/>
            <person name="Grimmond S.M."/>
            <person name="Teasdale R.D."/>
            <person name="Liu E.T."/>
            <person name="Brusic V."/>
            <person name="Quackenbush J."/>
            <person name="Wahlestedt C."/>
            <person name="Mattick J.S."/>
            <person name="Hume D.A."/>
            <person name="Kai C."/>
            <person name="Sasaki D."/>
            <person name="Tomaru Y."/>
            <person name="Fukuda S."/>
            <person name="Kanamori-Katayama M."/>
            <person name="Suzuki M."/>
            <person name="Aoki J."/>
            <person name="Arakawa T."/>
            <person name="Iida J."/>
            <person name="Imamura K."/>
            <person name="Itoh M."/>
            <person name="Kato T."/>
            <person name="Kawaji H."/>
            <person name="Kawagashira N."/>
            <person name="Kawashima T."/>
            <person name="Kojima M."/>
            <person name="Kondo S."/>
            <person name="Konno H."/>
            <person name="Nakano K."/>
            <person name="Ninomiya N."/>
            <person name="Nishio T."/>
            <person name="Okada M."/>
            <person name="Plessy C."/>
            <person name="Shibata K."/>
            <person name="Shiraki T."/>
            <person name="Suzuki S."/>
            <person name="Tagami M."/>
            <person name="Waki K."/>
            <person name="Watahiki A."/>
            <person name="Okamura-Oho Y."/>
            <person name="Suzuki H."/>
            <person name="Kawai J."/>
            <person name="Hayashizaki Y."/>
        </authorList>
    </citation>
    <scope>NUCLEOTIDE SEQUENCE [LARGE SCALE MRNA]</scope>
    <source>
        <strain>C57BL/6J</strain>
        <tissue>Muellerian duct</tissue>
        <tissue>Pancreas</tissue>
    </source>
</reference>
<reference key="2">
    <citation type="journal article" date="2004" name="Genome Res.">
        <title>The status, quality, and expansion of the NIH full-length cDNA project: the Mammalian Gene Collection (MGC).</title>
        <authorList>
            <consortium name="The MGC Project Team"/>
        </authorList>
    </citation>
    <scope>NUCLEOTIDE SEQUENCE [LARGE SCALE MRNA]</scope>
    <source>
        <tissue>Testis</tissue>
    </source>
</reference>
<sequence length="102" mass="11767">MDPPTRPSVSGPRTRARPPPPEALPTVGFEEEVYDCLDYYYLRDFPASGAGRSKGRTRREQQLRTNYPVPGGHERKVAQILLNGQRKRRQRQLQPRPRTRLA</sequence>
<organism>
    <name type="scientific">Mus musculus</name>
    <name type="common">Mouse</name>
    <dbReference type="NCBI Taxonomy" id="10090"/>
    <lineage>
        <taxon>Eukaryota</taxon>
        <taxon>Metazoa</taxon>
        <taxon>Chordata</taxon>
        <taxon>Craniata</taxon>
        <taxon>Vertebrata</taxon>
        <taxon>Euteleostomi</taxon>
        <taxon>Mammalia</taxon>
        <taxon>Eutheria</taxon>
        <taxon>Euarchontoglires</taxon>
        <taxon>Glires</taxon>
        <taxon>Rodentia</taxon>
        <taxon>Myomorpha</taxon>
        <taxon>Muroidea</taxon>
        <taxon>Muridae</taxon>
        <taxon>Murinae</taxon>
        <taxon>Mus</taxon>
        <taxon>Mus</taxon>
    </lineage>
</organism>
<keyword id="KW-0131">Cell cycle</keyword>
<keyword id="KW-0338">Growth arrest</keyword>
<keyword id="KW-0539">Nucleus</keyword>
<keyword id="KW-1185">Reference proteome</keyword>
<keyword id="KW-0678">Repressor</keyword>
<keyword id="KW-0804">Transcription</keyword>
<keyword id="KW-0805">Transcription regulation</keyword>
<name>NUPR2_MOUSE</name>
<feature type="chain" id="PRO_0000346769" description="Nuclear protein 2">
    <location>
        <begin position="1"/>
        <end position="102"/>
    </location>
</feature>
<feature type="region of interest" description="Disordered" evidence="2">
    <location>
        <begin position="1"/>
        <end position="26"/>
    </location>
</feature>
<feature type="region of interest" description="Disordered" evidence="2">
    <location>
        <begin position="46"/>
        <end position="102"/>
    </location>
</feature>
<feature type="compositionally biased region" description="Basic residues" evidence="2">
    <location>
        <begin position="85"/>
        <end position="102"/>
    </location>
</feature>
<feature type="sequence conflict" description="In Ref. 1; BAE22513." evidence="3" ref="1">
    <original>Q</original>
    <variation>H</variation>
    <location>
        <position position="85"/>
    </location>
</feature>
<protein>
    <recommendedName>
        <fullName evidence="3">Nuclear protein 2</fullName>
    </recommendedName>
    <alternativeName>
        <fullName evidence="1">Nuclear transcriptional regulator 1-like protein</fullName>
    </alternativeName>
    <alternativeName>
        <fullName evidence="1">Nuclear transcriptional regulator protein 2</fullName>
    </alternativeName>
</protein>